<gene>
    <name evidence="1" type="primary">uppP</name>
    <name type="synonym">bacA</name>
    <name type="synonym">upk</name>
    <name type="ordered locus">TTE0996</name>
</gene>
<protein>
    <recommendedName>
        <fullName evidence="1">Undecaprenyl-diphosphatase</fullName>
        <ecNumber evidence="1">3.6.1.27</ecNumber>
    </recommendedName>
    <alternativeName>
        <fullName evidence="1">Bacitracin resistance protein</fullName>
    </alternativeName>
    <alternativeName>
        <fullName evidence="1">Undecaprenyl pyrophosphate phosphatase</fullName>
    </alternativeName>
</protein>
<keyword id="KW-0046">Antibiotic resistance</keyword>
<keyword id="KW-1003">Cell membrane</keyword>
<keyword id="KW-0133">Cell shape</keyword>
<keyword id="KW-0961">Cell wall biogenesis/degradation</keyword>
<keyword id="KW-0378">Hydrolase</keyword>
<keyword id="KW-0472">Membrane</keyword>
<keyword id="KW-0573">Peptidoglycan synthesis</keyword>
<keyword id="KW-1185">Reference proteome</keyword>
<keyword id="KW-0812">Transmembrane</keyword>
<keyword id="KW-1133">Transmembrane helix</keyword>
<proteinExistence type="inferred from homology"/>
<name>UPPP_CALS4</name>
<organism>
    <name type="scientific">Caldanaerobacter subterraneus subsp. tengcongensis (strain DSM 15242 / JCM 11007 / NBRC 100824 / MB4)</name>
    <name type="common">Thermoanaerobacter tengcongensis</name>
    <dbReference type="NCBI Taxonomy" id="273068"/>
    <lineage>
        <taxon>Bacteria</taxon>
        <taxon>Bacillati</taxon>
        <taxon>Bacillota</taxon>
        <taxon>Clostridia</taxon>
        <taxon>Thermoanaerobacterales</taxon>
        <taxon>Thermoanaerobacteraceae</taxon>
        <taxon>Caldanaerobacter</taxon>
    </lineage>
</organism>
<dbReference type="EC" id="3.6.1.27" evidence="1"/>
<dbReference type="EMBL" id="AE008691">
    <property type="protein sequence ID" value="AAM24251.1"/>
    <property type="molecule type" value="Genomic_DNA"/>
</dbReference>
<dbReference type="SMR" id="Q8RB29"/>
<dbReference type="STRING" id="273068.TTE0996"/>
<dbReference type="KEGG" id="tte:TTE0996"/>
<dbReference type="eggNOG" id="COG1968">
    <property type="taxonomic scope" value="Bacteria"/>
</dbReference>
<dbReference type="HOGENOM" id="CLU_060296_2_0_9"/>
<dbReference type="Proteomes" id="UP000000555">
    <property type="component" value="Chromosome"/>
</dbReference>
<dbReference type="GO" id="GO:0005886">
    <property type="term" value="C:plasma membrane"/>
    <property type="evidence" value="ECO:0007669"/>
    <property type="project" value="UniProtKB-SubCell"/>
</dbReference>
<dbReference type="GO" id="GO:0050380">
    <property type="term" value="F:undecaprenyl-diphosphatase activity"/>
    <property type="evidence" value="ECO:0007669"/>
    <property type="project" value="UniProtKB-UniRule"/>
</dbReference>
<dbReference type="GO" id="GO:0071555">
    <property type="term" value="P:cell wall organization"/>
    <property type="evidence" value="ECO:0007669"/>
    <property type="project" value="UniProtKB-KW"/>
</dbReference>
<dbReference type="GO" id="GO:0009252">
    <property type="term" value="P:peptidoglycan biosynthetic process"/>
    <property type="evidence" value="ECO:0007669"/>
    <property type="project" value="UniProtKB-KW"/>
</dbReference>
<dbReference type="GO" id="GO:0008360">
    <property type="term" value="P:regulation of cell shape"/>
    <property type="evidence" value="ECO:0007669"/>
    <property type="project" value="UniProtKB-KW"/>
</dbReference>
<dbReference type="GO" id="GO:0046677">
    <property type="term" value="P:response to antibiotic"/>
    <property type="evidence" value="ECO:0007669"/>
    <property type="project" value="UniProtKB-UniRule"/>
</dbReference>
<dbReference type="HAMAP" id="MF_01006">
    <property type="entry name" value="Undec_diphosphatase"/>
    <property type="match status" value="1"/>
</dbReference>
<dbReference type="InterPro" id="IPR003824">
    <property type="entry name" value="UppP"/>
</dbReference>
<dbReference type="NCBIfam" id="NF001389">
    <property type="entry name" value="PRK00281.1-2"/>
    <property type="match status" value="1"/>
</dbReference>
<dbReference type="NCBIfam" id="NF001390">
    <property type="entry name" value="PRK00281.1-4"/>
    <property type="match status" value="1"/>
</dbReference>
<dbReference type="NCBIfam" id="TIGR00753">
    <property type="entry name" value="undec_PP_bacA"/>
    <property type="match status" value="1"/>
</dbReference>
<dbReference type="PANTHER" id="PTHR30622">
    <property type="entry name" value="UNDECAPRENYL-DIPHOSPHATASE"/>
    <property type="match status" value="1"/>
</dbReference>
<dbReference type="PANTHER" id="PTHR30622:SF3">
    <property type="entry name" value="UNDECAPRENYL-DIPHOSPHATASE"/>
    <property type="match status" value="1"/>
</dbReference>
<dbReference type="Pfam" id="PF02673">
    <property type="entry name" value="BacA"/>
    <property type="match status" value="1"/>
</dbReference>
<feature type="chain" id="PRO_0000151230" description="Undecaprenyl-diphosphatase">
    <location>
        <begin position="1"/>
        <end position="271"/>
    </location>
</feature>
<feature type="transmembrane region" description="Helical" evidence="1">
    <location>
        <begin position="5"/>
        <end position="25"/>
    </location>
</feature>
<feature type="transmembrane region" description="Helical" evidence="1">
    <location>
        <begin position="43"/>
        <end position="63"/>
    </location>
</feature>
<feature type="transmembrane region" description="Helical" evidence="1">
    <location>
        <begin position="80"/>
        <end position="100"/>
    </location>
</feature>
<feature type="transmembrane region" description="Helical" evidence="1">
    <location>
        <begin position="109"/>
        <end position="129"/>
    </location>
</feature>
<feature type="transmembrane region" description="Helical" evidence="1">
    <location>
        <begin position="145"/>
        <end position="165"/>
    </location>
</feature>
<feature type="transmembrane region" description="Helical" evidence="1">
    <location>
        <begin position="186"/>
        <end position="206"/>
    </location>
</feature>
<feature type="transmembrane region" description="Helical" evidence="1">
    <location>
        <begin position="215"/>
        <end position="235"/>
    </location>
</feature>
<feature type="transmembrane region" description="Helical" evidence="1">
    <location>
        <begin position="246"/>
        <end position="266"/>
    </location>
</feature>
<comment type="function">
    <text evidence="1">Catalyzes the dephosphorylation of undecaprenyl diphosphate (UPP). Confers resistance to bacitracin.</text>
</comment>
<comment type="catalytic activity">
    <reaction evidence="1">
        <text>di-trans,octa-cis-undecaprenyl diphosphate + H2O = di-trans,octa-cis-undecaprenyl phosphate + phosphate + H(+)</text>
        <dbReference type="Rhea" id="RHEA:28094"/>
        <dbReference type="ChEBI" id="CHEBI:15377"/>
        <dbReference type="ChEBI" id="CHEBI:15378"/>
        <dbReference type="ChEBI" id="CHEBI:43474"/>
        <dbReference type="ChEBI" id="CHEBI:58405"/>
        <dbReference type="ChEBI" id="CHEBI:60392"/>
        <dbReference type="EC" id="3.6.1.27"/>
    </reaction>
</comment>
<comment type="subcellular location">
    <subcellularLocation>
        <location evidence="1">Cell membrane</location>
        <topology evidence="1">Multi-pass membrane protein</topology>
    </subcellularLocation>
</comment>
<comment type="miscellaneous">
    <text>Bacitracin is thought to be involved in the inhibition of peptidoglycan synthesis by sequestering undecaprenyl diphosphate, thereby reducing the pool of lipid carrier available.</text>
</comment>
<comment type="similarity">
    <text evidence="1">Belongs to the UppP family.</text>
</comment>
<accession>Q8RB29</accession>
<reference key="1">
    <citation type="journal article" date="2002" name="Genome Res.">
        <title>A complete sequence of the T. tengcongensis genome.</title>
        <authorList>
            <person name="Bao Q."/>
            <person name="Tian Y."/>
            <person name="Li W."/>
            <person name="Xu Z."/>
            <person name="Xuan Z."/>
            <person name="Hu S."/>
            <person name="Dong W."/>
            <person name="Yang J."/>
            <person name="Chen Y."/>
            <person name="Xue Y."/>
            <person name="Xu Y."/>
            <person name="Lai X."/>
            <person name="Huang L."/>
            <person name="Dong X."/>
            <person name="Ma Y."/>
            <person name="Ling L."/>
            <person name="Tan H."/>
            <person name="Chen R."/>
            <person name="Wang J."/>
            <person name="Yu J."/>
            <person name="Yang H."/>
        </authorList>
    </citation>
    <scope>NUCLEOTIDE SEQUENCE [LARGE SCALE GENOMIC DNA]</scope>
    <source>
        <strain>DSM 15242 / JCM 11007 / NBRC 100824 / MB4</strain>
    </source>
</reference>
<evidence type="ECO:0000255" key="1">
    <source>
        <dbReference type="HAMAP-Rule" id="MF_01006"/>
    </source>
</evidence>
<sequence length="271" mass="30138">MKMELLIKAFIMGIVEGLTEFLPISSTGHLIIVGSFIKFTGKFATMFEIVIQLGAILAVVYYFKDKILSSLKALKPGEWGFNLWYKTFIAFLPAAIIGILTHHYIEEHLFSPFTVAIALIVGAIMMIVIEDIFGKKYKIDNMDKVSTSKAFWIGVAQVMSLFPGMSRSASTIMGGMLVGLSVRAAAEFSFFLAIPTMLAATGFELVKNITSMSLLEWEALAVGFIMSFITALIVVDKFLAYLKRHVLKPFAYYRLLVGVLMLFLIAQKIVK</sequence>